<gene>
    <name type="primary">Eif4ebp1</name>
</gene>
<protein>
    <recommendedName>
        <fullName>Eukaryotic translation initiation factor 4E-binding protein 1</fullName>
        <shortName>4E-BP1</shortName>
        <shortName>eIF4E-binding protein 1</shortName>
    </recommendedName>
    <alternativeName>
        <fullName>Phosphorylated heat- and acid-stable protein regulated by insulin 1</fullName>
        <shortName>PHAS-I</shortName>
    </alternativeName>
</protein>
<sequence>MSAGSSCSQTPSRAIPTRRVALGDGVQLPPGDYSTTPGGTLFSTTPGGTRIIYDRKFLMECRNSPVAKTPPKDLPTIPGVTSPTSDEPPMQASQSHLHSSPEDKRAGGEESQFEMDI</sequence>
<feature type="initiator methionine" description="Removed" evidence="2">
    <location>
        <position position="1"/>
    </location>
</feature>
<feature type="chain" id="PRO_0000190515" description="Eukaryotic translation initiation factor 4E-binding protein 1">
    <location>
        <begin position="2"/>
        <end position="117"/>
    </location>
</feature>
<feature type="region of interest" description="Disordered" evidence="4">
    <location>
        <begin position="1"/>
        <end position="47"/>
    </location>
</feature>
<feature type="region of interest" description="Disordered" evidence="4">
    <location>
        <begin position="64"/>
        <end position="117"/>
    </location>
</feature>
<feature type="short sequence motif" description="YXXXXLphi motif" evidence="1">
    <location>
        <begin position="53"/>
        <end position="59"/>
    </location>
</feature>
<feature type="short sequence motif" description="TOS motif" evidence="2">
    <location>
        <begin position="113"/>
        <end position="117"/>
    </location>
</feature>
<feature type="compositionally biased region" description="Polar residues" evidence="4">
    <location>
        <begin position="1"/>
        <end position="12"/>
    </location>
</feature>
<feature type="compositionally biased region" description="Polar residues" evidence="4">
    <location>
        <begin position="33"/>
        <end position="47"/>
    </location>
</feature>
<feature type="compositionally biased region" description="Polar residues" evidence="4">
    <location>
        <begin position="79"/>
        <end position="98"/>
    </location>
</feature>
<feature type="compositionally biased region" description="Basic and acidic residues" evidence="4">
    <location>
        <begin position="99"/>
        <end position="108"/>
    </location>
</feature>
<feature type="modified residue" description="N-acetylserine" evidence="2">
    <location>
        <position position="2"/>
    </location>
</feature>
<feature type="modified residue" description="Phosphothreonine" evidence="9">
    <location>
        <position position="36"/>
    </location>
</feature>
<feature type="modified residue" description="Phosphothreonine" evidence="2">
    <location>
        <position position="40"/>
    </location>
</feature>
<feature type="modified residue" description="Phosphoserine" evidence="3">
    <location>
        <position position="43"/>
    </location>
</feature>
<feature type="modified residue" description="Phosphothreonine; by MTOR" evidence="2">
    <location>
        <position position="45"/>
    </location>
</feature>
<feature type="modified residue" description="Phosphothreonine" evidence="2">
    <location>
        <position position="49"/>
    </location>
</feature>
<feature type="modified residue" description="Phosphotyrosine" evidence="2">
    <location>
        <position position="53"/>
    </location>
</feature>
<feature type="modified residue" description="Phosphoserine; by DYRK2, MAPK1, MAPK3 and MTOR" evidence="5">
    <location>
        <position position="64"/>
    </location>
</feature>
<feature type="modified residue" description="Phosphothreonine; by MTOR" evidence="2">
    <location>
        <position position="69"/>
    </location>
</feature>
<feature type="modified residue" description="Phosphothreonine" evidence="2">
    <location>
        <position position="76"/>
    </location>
</feature>
<feature type="modified residue" description="Phosphoserine" evidence="2">
    <location>
        <position position="82"/>
    </location>
</feature>
<feature type="modified residue" description="Phosphoserine" evidence="3">
    <location>
        <position position="95"/>
    </location>
</feature>
<feature type="modified residue" description="Phosphoserine" evidence="3">
    <location>
        <position position="99"/>
    </location>
</feature>
<feature type="modified residue" description="Phosphoserine; by DYRK2" evidence="2">
    <location>
        <position position="100"/>
    </location>
</feature>
<feature type="modified residue" description="Phosphoserine" evidence="2">
    <location>
        <position position="111"/>
    </location>
</feature>
<feature type="cross-link" description="Glycyl lysine isopeptide (Lys-Gly) (interchain with G-Cter in ubiquitin)" evidence="2">
    <location>
        <position position="56"/>
    </location>
</feature>
<feature type="mutagenesis site" description="Decreases phosphorylation by MAPK1 and MAPK3." evidence="5">
    <original>S</original>
    <variation>A</variation>
    <location>
        <position position="64"/>
    </location>
</feature>
<feature type="sequence conflict" description="In Ref. 1; AA sequence." evidence="7" ref="1">
    <original>R</original>
    <variation>N</variation>
    <location>
        <position position="19"/>
    </location>
</feature>
<feature type="sequence conflict" description="In Ref. 1; AA sequence." evidence="7" ref="1">
    <original>T</original>
    <variation>P</variation>
    <location>
        <position position="69"/>
    </location>
</feature>
<feature type="sequence conflict" description="In Ref. 1; AA sequence." evidence="7" ref="1">
    <original>P</original>
    <variation>L</variation>
    <location>
        <position position="75"/>
    </location>
</feature>
<keyword id="KW-0007">Acetylation</keyword>
<keyword id="KW-0963">Cytoplasm</keyword>
<keyword id="KW-0903">Direct protein sequencing</keyword>
<keyword id="KW-1017">Isopeptide bond</keyword>
<keyword id="KW-0539">Nucleus</keyword>
<keyword id="KW-0597">Phosphoprotein</keyword>
<keyword id="KW-0652">Protein synthesis inhibitor</keyword>
<keyword id="KW-1185">Reference proteome</keyword>
<keyword id="KW-0810">Translation regulation</keyword>
<keyword id="KW-0832">Ubl conjugation</keyword>
<reference key="1">
    <citation type="journal article" date="1994" name="Proc. Natl. Acad. Sci. U.S.A.">
        <title>Molecular cloning and tissue distribution of PHAS-I, an intracellular target for insulin and growth factors.</title>
        <authorList>
            <person name="Hu C."/>
            <person name="Pang S."/>
            <person name="Kong X."/>
            <person name="Velleca M."/>
            <person name="Lawrence J.C. Jr."/>
        </authorList>
    </citation>
    <scope>NUCLEOTIDE SEQUENCE [MRNA]</scope>
    <scope>PROTEIN SEQUENCE OF 18-33; 43-53; 62-80 AND 98-117</scope>
    <scope>PHOSPHORYLATION</scope>
    <scope>TISSUE SPECIFICITY</scope>
    <source>
        <strain evidence="6">Sprague-Dawley</strain>
        <tissue evidence="6">Adipocyte</tissue>
        <tissue evidence="8">Skeletal muscle</tissue>
    </source>
</reference>
<reference key="2">
    <citation type="journal article" date="1994" name="Science">
        <title>PHAS-I as a link between mitogen-activated protein kinase and translation initiation.</title>
        <authorList>
            <person name="Lin T.-A."/>
            <person name="Kong X."/>
            <person name="Haystead T.A.J."/>
            <person name="Pause A."/>
            <person name="Belsham G.J."/>
            <person name="Sonenberg N."/>
            <person name="Lawrence J.C. Jr."/>
        </authorList>
    </citation>
    <scope>FUNCTION</scope>
    <scope>INTERACTION WITH EIF4E</scope>
    <scope>PHOSPHORYLATION AT SER-64 BY MAPK1 AND MAPK3</scope>
    <scope>MUTAGENESIS OF SER-64</scope>
</reference>
<reference key="3">
    <citation type="journal article" date="2012" name="Nat. Commun.">
        <title>Quantitative maps of protein phosphorylation sites across 14 different rat organs and tissues.</title>
        <authorList>
            <person name="Lundby A."/>
            <person name="Secher A."/>
            <person name="Lage K."/>
            <person name="Nordsborg N.B."/>
            <person name="Dmytriyev A."/>
            <person name="Lundby C."/>
            <person name="Olsen J.V."/>
        </authorList>
    </citation>
    <scope>PHOSPHORYLATION [LARGE SCALE ANALYSIS] AT THR-36</scope>
    <scope>IDENTIFICATION BY MASS SPECTROMETRY [LARGE SCALE ANALYSIS]</scope>
</reference>
<comment type="function">
    <text evidence="2 5">Repressor of translation initiation that regulates EIF4E activity by preventing its assembly into the eIF4F complex: hypophosphorylated form competes with EIF4G1/EIF4G3 and strongly binds to EIF4E, leading to repress translation. In contrast, hyperphosphorylated form dissociates from EIF4E, allowing interaction between EIF4G1/EIF4G3 and EIF4E, leading to initiation of translation (By similarity). Mediates the regulation of protein translation by hormones, growth factors and other stimuli that signal through the MAP kinase and mTORC1 pathways (PubMed:7939721).</text>
</comment>
<comment type="subunit">
    <text evidence="2 5">Hypophosphorylated EIF4EBP1 competes with EIF4G1/EIF4G3 to interact with EIF4E; insulin stimulated MAP-kinase (MAPK1 and MAPK3) or mTORC1 phosphorylation of EIF4EBP1 causes dissociation of the complex allowing EIF4G1/EIF4G3 to bind and consequent initiation of translation (PubMed:7939721). Interacts (via TOS motif) with RPTOR; promoting phosphorylation by mTORC1 (By similarity).</text>
</comment>
<comment type="subcellular location">
    <subcellularLocation>
        <location evidence="3">Cytoplasm</location>
    </subcellularLocation>
    <subcellularLocation>
        <location evidence="3">Nucleus</location>
    </subcellularLocation>
    <text evidence="3">Localization to the nucleus is unaffected by phosphorylation status.</text>
</comment>
<comment type="tissue specificity">
    <text evidence="5 6">Expressed in all tissues examined; highest levels in fat and skeletal tissue, lowest levels in kidney.</text>
</comment>
<comment type="domain">
    <text evidence="2">The TOS motif mediates interaction with RPTOR, leading to promote phosphorylation by mTORC1 complex.</text>
</comment>
<comment type="PTM">
    <text evidence="5 6">Phosphorylated on serine and threonine residues in response to insulin, EGF and PDGF. Phosphorylation at Thr-36, Thr-45, Ser-64 and Thr-69, corresponding to the hyperphosphorylated form, is regulated by mTORC1 and abolishes binding to EIF4E.</text>
</comment>
<comment type="PTM">
    <text evidence="2">Ubiquitinated: when eIF4E levels are low, hypophosphorylated form is ubiquitinated by the BCR(KLHL25) complex, leading to its degradation and serving as a homeostatic mechanism to maintain translation and prevent eIF4E inhibition when eIF4E levels are low. Not ubiquitinated when hyperphosphorylated (at Thr-36, Thr-45, Ser-64 and Thr-69) or associated with eIF4E.</text>
</comment>
<comment type="similarity">
    <text evidence="7">Belongs to the eIF4E-binding protein family.</text>
</comment>
<evidence type="ECO:0000250" key="1">
    <source>
        <dbReference type="UniProtKB" id="P70445"/>
    </source>
</evidence>
<evidence type="ECO:0000250" key="2">
    <source>
        <dbReference type="UniProtKB" id="Q13541"/>
    </source>
</evidence>
<evidence type="ECO:0000250" key="3">
    <source>
        <dbReference type="UniProtKB" id="Q60876"/>
    </source>
</evidence>
<evidence type="ECO:0000256" key="4">
    <source>
        <dbReference type="SAM" id="MobiDB-lite"/>
    </source>
</evidence>
<evidence type="ECO:0000269" key="5">
    <source>
    </source>
</evidence>
<evidence type="ECO:0000269" key="6">
    <source>
    </source>
</evidence>
<evidence type="ECO:0000305" key="7"/>
<evidence type="ECO:0000312" key="8">
    <source>
        <dbReference type="EMBL" id="AAA86938.1"/>
    </source>
</evidence>
<evidence type="ECO:0007744" key="9">
    <source>
    </source>
</evidence>
<dbReference type="EMBL" id="U05014">
    <property type="protein sequence ID" value="AAA86938.1"/>
    <property type="molecule type" value="mRNA"/>
</dbReference>
<dbReference type="PIR" id="A55258">
    <property type="entry name" value="A55258"/>
</dbReference>
<dbReference type="RefSeq" id="NP_446309.1">
    <property type="nucleotide sequence ID" value="NM_053857.2"/>
</dbReference>
<dbReference type="SMR" id="Q62622"/>
<dbReference type="BioGRID" id="250521">
    <property type="interactions" value="7"/>
</dbReference>
<dbReference type="DIP" id="DIP-267N"/>
<dbReference type="ELM" id="Q62622"/>
<dbReference type="FunCoup" id="Q62622">
    <property type="interactions" value="231"/>
</dbReference>
<dbReference type="MINT" id="Q62622"/>
<dbReference type="STRING" id="10116.ENSRNOP00000016885"/>
<dbReference type="ChEMBL" id="CHEMBL5169161"/>
<dbReference type="GlyGen" id="Q62622">
    <property type="glycosylation" value="1 site, 1 O-linked glycan (1 site)"/>
</dbReference>
<dbReference type="iPTMnet" id="Q62622"/>
<dbReference type="PhosphoSitePlus" id="Q62622"/>
<dbReference type="PaxDb" id="10116-ENSRNOP00000016885"/>
<dbReference type="Ensembl" id="ENSRNOT00000096679.1">
    <property type="protein sequence ID" value="ENSRNOP00000087155.1"/>
    <property type="gene ID" value="ENSRNOG00000012582.6"/>
</dbReference>
<dbReference type="GeneID" id="116636"/>
<dbReference type="KEGG" id="rno:116636"/>
<dbReference type="UCSC" id="RGD:620259">
    <property type="organism name" value="rat"/>
</dbReference>
<dbReference type="AGR" id="RGD:620259"/>
<dbReference type="CTD" id="1978"/>
<dbReference type="RGD" id="620259">
    <property type="gene designation" value="Eif4ebp1"/>
</dbReference>
<dbReference type="eggNOG" id="ENOG502S4SY">
    <property type="taxonomic scope" value="Eukaryota"/>
</dbReference>
<dbReference type="GeneTree" id="ENSGT00940000159932"/>
<dbReference type="HOGENOM" id="CLU_111706_0_0_1"/>
<dbReference type="InParanoid" id="Q62622"/>
<dbReference type="OMA" id="DEHPQFE"/>
<dbReference type="OrthoDB" id="10597at9989"/>
<dbReference type="PhylomeDB" id="Q62622"/>
<dbReference type="TreeFam" id="TF101530"/>
<dbReference type="Reactome" id="R-RNO-166208">
    <property type="pathway name" value="mTORC1-mediated signalling"/>
</dbReference>
<dbReference type="Reactome" id="R-RNO-72662">
    <property type="pathway name" value="Activation of the mRNA upon binding of the cap-binding complex and eIFs, and subsequent binding to 43S"/>
</dbReference>
<dbReference type="PRO" id="PR:Q62622"/>
<dbReference type="Proteomes" id="UP000002494">
    <property type="component" value="Chromosome 16"/>
</dbReference>
<dbReference type="Bgee" id="ENSRNOG00000012582">
    <property type="expression patterns" value="Expressed in pancreas and 19 other cell types or tissues"/>
</dbReference>
<dbReference type="GO" id="GO:0005737">
    <property type="term" value="C:cytoplasm"/>
    <property type="evidence" value="ECO:0000318"/>
    <property type="project" value="GO_Central"/>
</dbReference>
<dbReference type="GO" id="GO:0005829">
    <property type="term" value="C:cytosol"/>
    <property type="evidence" value="ECO:0000250"/>
    <property type="project" value="AgBase"/>
</dbReference>
<dbReference type="GO" id="GO:0098978">
    <property type="term" value="C:glutamatergic synapse"/>
    <property type="evidence" value="ECO:0000314"/>
    <property type="project" value="SynGO"/>
</dbReference>
<dbReference type="GO" id="GO:0005634">
    <property type="term" value="C:nucleus"/>
    <property type="evidence" value="ECO:0007669"/>
    <property type="project" value="UniProtKB-SubCell"/>
</dbReference>
<dbReference type="GO" id="GO:0099524">
    <property type="term" value="C:postsynaptic cytosol"/>
    <property type="evidence" value="ECO:0000314"/>
    <property type="project" value="SynGO"/>
</dbReference>
<dbReference type="GO" id="GO:0032991">
    <property type="term" value="C:protein-containing complex"/>
    <property type="evidence" value="ECO:0000314"/>
    <property type="project" value="RGD"/>
</dbReference>
<dbReference type="GO" id="GO:0008190">
    <property type="term" value="F:eukaryotic initiation factor 4E binding"/>
    <property type="evidence" value="ECO:0000353"/>
    <property type="project" value="RGD"/>
</dbReference>
<dbReference type="GO" id="GO:0051721">
    <property type="term" value="F:protein phosphatase 2A binding"/>
    <property type="evidence" value="ECO:0000353"/>
    <property type="project" value="RGD"/>
</dbReference>
<dbReference type="GO" id="GO:0031369">
    <property type="term" value="F:translation initiation factor binding"/>
    <property type="evidence" value="ECO:0000353"/>
    <property type="project" value="RGD"/>
</dbReference>
<dbReference type="GO" id="GO:0030371">
    <property type="term" value="F:translation repressor activity"/>
    <property type="evidence" value="ECO:0000250"/>
    <property type="project" value="UniProtKB"/>
</dbReference>
<dbReference type="GO" id="GO:0071549">
    <property type="term" value="P:cellular response to dexamethasone stimulus"/>
    <property type="evidence" value="ECO:0000266"/>
    <property type="project" value="RGD"/>
</dbReference>
<dbReference type="GO" id="GO:0071456">
    <property type="term" value="P:cellular response to hypoxia"/>
    <property type="evidence" value="ECO:0000314"/>
    <property type="project" value="RGD"/>
</dbReference>
<dbReference type="GO" id="GO:0000082">
    <property type="term" value="P:G1/S transition of mitotic cell cycle"/>
    <property type="evidence" value="ECO:0000266"/>
    <property type="project" value="RGD"/>
</dbReference>
<dbReference type="GO" id="GO:0008286">
    <property type="term" value="P:insulin receptor signaling pathway"/>
    <property type="evidence" value="ECO:0000266"/>
    <property type="project" value="RGD"/>
</dbReference>
<dbReference type="GO" id="GO:0002192">
    <property type="term" value="P:IRES-dependent translational initiation of linear mRNA"/>
    <property type="evidence" value="ECO:0000266"/>
    <property type="project" value="RGD"/>
</dbReference>
<dbReference type="GO" id="GO:0030324">
    <property type="term" value="P:lung development"/>
    <property type="evidence" value="ECO:0000270"/>
    <property type="project" value="RGD"/>
</dbReference>
<dbReference type="GO" id="GO:0031333">
    <property type="term" value="P:negative regulation of protein-containing complex assembly"/>
    <property type="evidence" value="ECO:0000315"/>
    <property type="project" value="RGD"/>
</dbReference>
<dbReference type="GO" id="GO:0017148">
    <property type="term" value="P:negative regulation of translation"/>
    <property type="evidence" value="ECO:0000266"/>
    <property type="project" value="RGD"/>
</dbReference>
<dbReference type="GO" id="GO:0045947">
    <property type="term" value="P:negative regulation of translational initiation"/>
    <property type="evidence" value="ECO:0000315"/>
    <property type="project" value="RGD"/>
</dbReference>
<dbReference type="GO" id="GO:0045931">
    <property type="term" value="P:positive regulation of mitotic cell cycle"/>
    <property type="evidence" value="ECO:0000266"/>
    <property type="project" value="RGD"/>
</dbReference>
<dbReference type="GO" id="GO:1990928">
    <property type="term" value="P:response to amino acid starvation"/>
    <property type="evidence" value="ECO:0000314"/>
    <property type="project" value="RGD"/>
</dbReference>
<dbReference type="GO" id="GO:0045471">
    <property type="term" value="P:response to ethanol"/>
    <property type="evidence" value="ECO:0000270"/>
    <property type="project" value="RGD"/>
</dbReference>
<dbReference type="GO" id="GO:0002931">
    <property type="term" value="P:response to ischemia"/>
    <property type="evidence" value="ECO:0000270"/>
    <property type="project" value="RGD"/>
</dbReference>
<dbReference type="GO" id="GO:0031929">
    <property type="term" value="P:TOR signaling"/>
    <property type="evidence" value="ECO:0000250"/>
    <property type="project" value="UniProtKB"/>
</dbReference>
<dbReference type="InterPro" id="IPR008606">
    <property type="entry name" value="EIF4EBP"/>
</dbReference>
<dbReference type="PANTHER" id="PTHR12669">
    <property type="entry name" value="EUKARYOTIC TRANSLATION INITIATION FACTOR 4E-BINDING PROTEIN"/>
    <property type="match status" value="1"/>
</dbReference>
<dbReference type="PANTHER" id="PTHR12669:SF14">
    <property type="entry name" value="EUKARYOTIC TRANSLATION INITIATION FACTOR 4E-BINDING PROTEIN 1"/>
    <property type="match status" value="1"/>
</dbReference>
<dbReference type="Pfam" id="PF05456">
    <property type="entry name" value="eIF_4EBP"/>
    <property type="match status" value="1"/>
</dbReference>
<organism evidence="8">
    <name type="scientific">Rattus norvegicus</name>
    <name type="common">Rat</name>
    <dbReference type="NCBI Taxonomy" id="10116"/>
    <lineage>
        <taxon>Eukaryota</taxon>
        <taxon>Metazoa</taxon>
        <taxon>Chordata</taxon>
        <taxon>Craniata</taxon>
        <taxon>Vertebrata</taxon>
        <taxon>Euteleostomi</taxon>
        <taxon>Mammalia</taxon>
        <taxon>Eutheria</taxon>
        <taxon>Euarchontoglires</taxon>
        <taxon>Glires</taxon>
        <taxon>Rodentia</taxon>
        <taxon>Myomorpha</taxon>
        <taxon>Muroidea</taxon>
        <taxon>Muridae</taxon>
        <taxon>Murinae</taxon>
        <taxon>Rattus</taxon>
    </lineage>
</organism>
<accession>Q62622</accession>
<proteinExistence type="evidence at protein level"/>
<name>4EBP1_RAT</name>